<accession>P28024</accession>
<comment type="function">
    <text>Non-catalytic component of the proteasome, a multicatalytic proteinase complex which is characterized by its ability to cleave peptides with Arg, Phe, Tyr, Leu, and Glu adjacent to the leaving group at neutral or slightly basic pH. The proteasome has an ATP-dependent proteolytic activity.</text>
</comment>
<comment type="subunit">
    <text>The 26S proteasome consists of a 20S proteasome core and two 19S regulatory subunits. The 20S proteasome core is composed of 28 subunits that are arranged in four stacked rings, resulting in a barrel-shaped structure. The two end rings are each formed by seven alpha subunits, and the two central rings are each formed by seven beta subunits. The catalytic chamber with the active sites is on the inside of the barrel.</text>
</comment>
<comment type="subcellular location">
    <subcellularLocation>
        <location>Cytoplasm</location>
    </subcellularLocation>
    <subcellularLocation>
        <location>Nucleus</location>
    </subcellularLocation>
</comment>
<comment type="similarity">
    <text evidence="3">Belongs to the peptidase T1B family.</text>
</comment>
<comment type="sequence caution" evidence="4">
    <conflict type="erroneous initiation">
        <sequence resource="EMBL-CDS" id="CAA44593"/>
    </conflict>
</comment>
<feature type="propeptide" id="PRO_0000026587" evidence="2">
    <location>
        <begin position="1" status="less than"/>
        <end position="23"/>
    </location>
</feature>
<feature type="chain" id="PRO_0000026588" description="Proteasome subunit beta type-4">
    <location>
        <begin position="24"/>
        <end position="242"/>
    </location>
</feature>
<feature type="active site" description="Nucleophile" evidence="1">
    <location>
        <position position="24"/>
    </location>
</feature>
<feature type="non-terminal residue">
    <location>
        <position position="1"/>
    </location>
</feature>
<keyword id="KW-0963">Cytoplasm</keyword>
<keyword id="KW-0539">Nucleus</keyword>
<keyword id="KW-0647">Proteasome</keyword>
<keyword id="KW-1185">Reference proteome</keyword>
<name>PSB4_XENLA</name>
<organism>
    <name type="scientific">Xenopus laevis</name>
    <name type="common">African clawed frog</name>
    <dbReference type="NCBI Taxonomy" id="8355"/>
    <lineage>
        <taxon>Eukaryota</taxon>
        <taxon>Metazoa</taxon>
        <taxon>Chordata</taxon>
        <taxon>Craniata</taxon>
        <taxon>Vertebrata</taxon>
        <taxon>Euteleostomi</taxon>
        <taxon>Amphibia</taxon>
        <taxon>Batrachia</taxon>
        <taxon>Anura</taxon>
        <taxon>Pipoidea</taxon>
        <taxon>Pipidae</taxon>
        <taxon>Xenopodinae</taxon>
        <taxon>Xenopus</taxon>
        <taxon>Xenopus</taxon>
    </lineage>
</organism>
<sequence length="242" mass="26759">ESVARGTAPGELHCFPGAGPVRHTLNPMVTGTSVLGVKFDGGVIIAADMLGSYGSLARFRNISRIMKVNENTILGASGDYADYQYLKQVIDQMVIDEELVGDGHNYSPKAIHSWLTRVMYNRRSKMNPLWNTVVIGGFYNGESFLGYVDKLGVAYEAPTIATGFGAYLAQPLLREVTENKATLSKEEARQLVDRCMKVLYYRDARSYNRFEITTVTESGVEVEGPLSSETNWEIAHLISGFE</sequence>
<gene>
    <name type="primary">psmb4</name>
</gene>
<proteinExistence type="evidence at transcript level"/>
<evidence type="ECO:0000250" key="1"/>
<evidence type="ECO:0000255" key="2"/>
<evidence type="ECO:0000255" key="3">
    <source>
        <dbReference type="PROSITE-ProRule" id="PRU00809"/>
    </source>
</evidence>
<evidence type="ECO:0000305" key="4"/>
<dbReference type="EMBL" id="X62709">
    <property type="protein sequence ID" value="CAA44593.1"/>
    <property type="status" value="ALT_INIT"/>
    <property type="molecule type" value="mRNA"/>
</dbReference>
<dbReference type="PIR" id="S17568">
    <property type="entry name" value="S17568"/>
</dbReference>
<dbReference type="SMR" id="P28024"/>
<dbReference type="MEROPS" id="T01.987"/>
<dbReference type="AGR" id="Xenbase:XB-GENE-6253413"/>
<dbReference type="Xenbase" id="XB-GENE-6253413">
    <property type="gene designation" value="psmb4.L"/>
</dbReference>
<dbReference type="OrthoDB" id="7854943at2759"/>
<dbReference type="Proteomes" id="UP000186698">
    <property type="component" value="Unplaced"/>
</dbReference>
<dbReference type="GO" id="GO:0005737">
    <property type="term" value="C:cytoplasm"/>
    <property type="evidence" value="ECO:0000318"/>
    <property type="project" value="GO_Central"/>
</dbReference>
<dbReference type="GO" id="GO:0005634">
    <property type="term" value="C:nucleus"/>
    <property type="evidence" value="ECO:0007669"/>
    <property type="project" value="UniProtKB-SubCell"/>
</dbReference>
<dbReference type="GO" id="GO:0005839">
    <property type="term" value="C:proteasome core complex"/>
    <property type="evidence" value="ECO:0000250"/>
    <property type="project" value="UniProtKB"/>
</dbReference>
<dbReference type="GO" id="GO:0019774">
    <property type="term" value="C:proteasome core complex, beta-subunit complex"/>
    <property type="evidence" value="ECO:0000250"/>
    <property type="project" value="UniProtKB"/>
</dbReference>
<dbReference type="GO" id="GO:0051603">
    <property type="term" value="P:proteolysis involved in protein catabolic process"/>
    <property type="evidence" value="ECO:0000318"/>
    <property type="project" value="GO_Central"/>
</dbReference>
<dbReference type="CDD" id="cd03760">
    <property type="entry name" value="proteasome_beta_type_4"/>
    <property type="match status" value="1"/>
</dbReference>
<dbReference type="FunFam" id="3.60.20.10:FF:000014">
    <property type="entry name" value="Proteasome subunit beta type-7"/>
    <property type="match status" value="1"/>
</dbReference>
<dbReference type="Gene3D" id="3.60.20.10">
    <property type="entry name" value="Glutamine Phosphoribosylpyrophosphate, subunit 1, domain 1"/>
    <property type="match status" value="1"/>
</dbReference>
<dbReference type="InterPro" id="IPR029055">
    <property type="entry name" value="Ntn_hydrolases_N"/>
</dbReference>
<dbReference type="InterPro" id="IPR016295">
    <property type="entry name" value="Proteasome_beta4"/>
</dbReference>
<dbReference type="InterPro" id="IPR016050">
    <property type="entry name" value="Proteasome_bsu_CS"/>
</dbReference>
<dbReference type="InterPro" id="IPR001353">
    <property type="entry name" value="Proteasome_sua/b"/>
</dbReference>
<dbReference type="InterPro" id="IPR023333">
    <property type="entry name" value="Proteasome_suB-type"/>
</dbReference>
<dbReference type="PANTHER" id="PTHR32194">
    <property type="entry name" value="METALLOPROTEASE TLDD"/>
    <property type="match status" value="1"/>
</dbReference>
<dbReference type="PANTHER" id="PTHR32194:SF6">
    <property type="entry name" value="PROTEASOME SUBUNIT BETA"/>
    <property type="match status" value="1"/>
</dbReference>
<dbReference type="Pfam" id="PF00227">
    <property type="entry name" value="Proteasome"/>
    <property type="match status" value="1"/>
</dbReference>
<dbReference type="PIRSF" id="PIRSF001213">
    <property type="entry name" value="Psome_endopept_beta"/>
    <property type="match status" value="1"/>
</dbReference>
<dbReference type="SUPFAM" id="SSF56235">
    <property type="entry name" value="N-terminal nucleophile aminohydrolases (Ntn hydrolases)"/>
    <property type="match status" value="1"/>
</dbReference>
<dbReference type="PROSITE" id="PS00854">
    <property type="entry name" value="PROTEASOME_BETA_1"/>
    <property type="match status" value="1"/>
</dbReference>
<dbReference type="PROSITE" id="PS51476">
    <property type="entry name" value="PROTEASOME_BETA_2"/>
    <property type="match status" value="1"/>
</dbReference>
<protein>
    <recommendedName>
        <fullName>Proteasome subunit beta type-4</fullName>
    </recommendedName>
    <alternativeName>
        <fullName>Macropain beta chain</fullName>
    </alternativeName>
    <alternativeName>
        <fullName>Multicatalytic endopeptidase complex beta chain</fullName>
    </alternativeName>
    <alternativeName>
        <fullName>Proteasome beta chain</fullName>
    </alternativeName>
    <alternativeName>
        <fullName>Proteasome chain 3</fullName>
    </alternativeName>
</protein>
<reference key="1">
    <citation type="journal article" date="1991" name="FEBS Lett.">
        <title>Cloning and sequence analysis of pituitary cDNA encoding the beta-subunit of Xenopus proteasome.</title>
        <authorList>
            <person name="van Riel M.C.H.M."/>
            <person name="Martens G.J.M."/>
        </authorList>
    </citation>
    <scope>NUCLEOTIDE SEQUENCE [MRNA]</scope>
    <source>
        <tissue>Pituitary</tissue>
    </source>
</reference>